<comment type="similarity">
    <text evidence="1">Belongs to the bacterial ribosomal protein bL27 family.</text>
</comment>
<feature type="chain" id="PRO_0000277947" description="Large ribosomal subunit protein bL27">
    <location>
        <begin position="1"/>
        <end position="86"/>
    </location>
</feature>
<feature type="region of interest" description="Disordered" evidence="2">
    <location>
        <begin position="1"/>
        <end position="24"/>
    </location>
</feature>
<protein>
    <recommendedName>
        <fullName evidence="1">Large ribosomal subunit protein bL27</fullName>
    </recommendedName>
    <alternativeName>
        <fullName evidence="3">50S ribosomal protein L27</fullName>
    </alternativeName>
</protein>
<keyword id="KW-0687">Ribonucleoprotein</keyword>
<keyword id="KW-0689">Ribosomal protein</keyword>
<sequence>MATKKAGGSSRNGRDSAGRRLGVKKADGQYVIPGNIIVRQRGTKIHPGTNVGLGKDHTIFALIEGRVEFLTKRNHKIVNVKEIASA</sequence>
<name>RL27_RICFE</name>
<evidence type="ECO:0000255" key="1">
    <source>
        <dbReference type="HAMAP-Rule" id="MF_00539"/>
    </source>
</evidence>
<evidence type="ECO:0000256" key="2">
    <source>
        <dbReference type="SAM" id="MobiDB-lite"/>
    </source>
</evidence>
<evidence type="ECO:0000305" key="3"/>
<gene>
    <name evidence="1" type="primary">rpmA</name>
    <name type="ordered locus">RF_1199</name>
</gene>
<organism>
    <name type="scientific">Rickettsia felis (strain ATCC VR-1525 / URRWXCal2)</name>
    <name type="common">Rickettsia azadi</name>
    <dbReference type="NCBI Taxonomy" id="315456"/>
    <lineage>
        <taxon>Bacteria</taxon>
        <taxon>Pseudomonadati</taxon>
        <taxon>Pseudomonadota</taxon>
        <taxon>Alphaproteobacteria</taxon>
        <taxon>Rickettsiales</taxon>
        <taxon>Rickettsiaceae</taxon>
        <taxon>Rickettsieae</taxon>
        <taxon>Rickettsia</taxon>
        <taxon>spotted fever group</taxon>
    </lineage>
</organism>
<reference key="1">
    <citation type="journal article" date="2005" name="PLoS Biol.">
        <title>The genome sequence of Rickettsia felis identifies the first putative conjugative plasmid in an obligate intracellular parasite.</title>
        <authorList>
            <person name="Ogata H."/>
            <person name="Renesto P."/>
            <person name="Audic S."/>
            <person name="Robert C."/>
            <person name="Blanc G."/>
            <person name="Fournier P.-E."/>
            <person name="Parinello H."/>
            <person name="Claverie J.-M."/>
            <person name="Raoult D."/>
        </authorList>
    </citation>
    <scope>NUCLEOTIDE SEQUENCE [LARGE SCALE GENOMIC DNA]</scope>
    <source>
        <strain>ATCC VR-1525 / URRWXCal2</strain>
    </source>
</reference>
<accession>Q4UK85</accession>
<dbReference type="EMBL" id="CP000053">
    <property type="protein sequence ID" value="AAY62050.1"/>
    <property type="molecule type" value="Genomic_DNA"/>
</dbReference>
<dbReference type="SMR" id="Q4UK85"/>
<dbReference type="STRING" id="315456.RF_1199"/>
<dbReference type="KEGG" id="rfe:RF_1199"/>
<dbReference type="eggNOG" id="COG0211">
    <property type="taxonomic scope" value="Bacteria"/>
</dbReference>
<dbReference type="HOGENOM" id="CLU_095424_4_1_5"/>
<dbReference type="OrthoDB" id="9803474at2"/>
<dbReference type="Proteomes" id="UP000008548">
    <property type="component" value="Chromosome"/>
</dbReference>
<dbReference type="GO" id="GO:1990904">
    <property type="term" value="C:ribonucleoprotein complex"/>
    <property type="evidence" value="ECO:0007669"/>
    <property type="project" value="UniProtKB-KW"/>
</dbReference>
<dbReference type="GO" id="GO:0005840">
    <property type="term" value="C:ribosome"/>
    <property type="evidence" value="ECO:0007669"/>
    <property type="project" value="UniProtKB-KW"/>
</dbReference>
<dbReference type="GO" id="GO:0003735">
    <property type="term" value="F:structural constituent of ribosome"/>
    <property type="evidence" value="ECO:0007669"/>
    <property type="project" value="InterPro"/>
</dbReference>
<dbReference type="GO" id="GO:0006412">
    <property type="term" value="P:translation"/>
    <property type="evidence" value="ECO:0007669"/>
    <property type="project" value="UniProtKB-UniRule"/>
</dbReference>
<dbReference type="FunFam" id="2.40.50.100:FF:000020">
    <property type="entry name" value="50S ribosomal protein L27"/>
    <property type="match status" value="1"/>
</dbReference>
<dbReference type="Gene3D" id="2.40.50.100">
    <property type="match status" value="1"/>
</dbReference>
<dbReference type="HAMAP" id="MF_00539">
    <property type="entry name" value="Ribosomal_bL27"/>
    <property type="match status" value="1"/>
</dbReference>
<dbReference type="InterPro" id="IPR001684">
    <property type="entry name" value="Ribosomal_bL27"/>
</dbReference>
<dbReference type="InterPro" id="IPR018261">
    <property type="entry name" value="Ribosomal_bL27_CS"/>
</dbReference>
<dbReference type="NCBIfam" id="TIGR00062">
    <property type="entry name" value="L27"/>
    <property type="match status" value="1"/>
</dbReference>
<dbReference type="PANTHER" id="PTHR15893:SF0">
    <property type="entry name" value="LARGE RIBOSOMAL SUBUNIT PROTEIN BL27M"/>
    <property type="match status" value="1"/>
</dbReference>
<dbReference type="PANTHER" id="PTHR15893">
    <property type="entry name" value="RIBOSOMAL PROTEIN L27"/>
    <property type="match status" value="1"/>
</dbReference>
<dbReference type="Pfam" id="PF01016">
    <property type="entry name" value="Ribosomal_L27"/>
    <property type="match status" value="1"/>
</dbReference>
<dbReference type="PRINTS" id="PR00063">
    <property type="entry name" value="RIBOSOMALL27"/>
</dbReference>
<dbReference type="SUPFAM" id="SSF110324">
    <property type="entry name" value="Ribosomal L27 protein-like"/>
    <property type="match status" value="1"/>
</dbReference>
<dbReference type="PROSITE" id="PS00831">
    <property type="entry name" value="RIBOSOMAL_L27"/>
    <property type="match status" value="1"/>
</dbReference>
<proteinExistence type="inferred from homology"/>